<comment type="function">
    <text evidence="2">Component of the Mediator complex, a coactivator involved in the regulated transcription of nearly all RNA polymerase II-dependent genes. Mediator functions as a bridge to convey information from gene-specific regulatory proteins to the basal RNA polymerase II transcription machinery. The Mediator complex, having a compact conformation in its free form, is recruited to promoters by direct interactions with regulatory proteins and serves for the assembly of a functional preinitiation complex with RNA polymerase II and the general transcription factors.</text>
</comment>
<comment type="subunit">
    <text evidence="2">Component of the Mediator complex.</text>
</comment>
<comment type="subcellular location">
    <subcellularLocation>
        <location evidence="1">Nucleus</location>
    </subcellularLocation>
</comment>
<comment type="similarity">
    <text evidence="3">Belongs to the Mediator complex subunit 20 family.</text>
</comment>
<sequence>MPVHGVIYYSSPSMATFLSPAQDNLVRTYFAQHLKKWVVQYKLYRNAVTPKTLEFLKQNINPSMLACVDEATMIDAEPELEDIIVRTKLWNFRQSFTIEGSIYEVGSFKVAIANVLQKSVWKGILFHVTYDGTESVDLARPIIQEFFLKCFLQNNKSVTPVYESFFNQPRHSLDSKLLLQLFKQRIDTVSQRT</sequence>
<reference key="1">
    <citation type="journal article" date="2002" name="Nature">
        <title>The genome sequence of Schizosaccharomyces pombe.</title>
        <authorList>
            <person name="Wood V."/>
            <person name="Gwilliam R."/>
            <person name="Rajandream M.A."/>
            <person name="Lyne M.H."/>
            <person name="Lyne R."/>
            <person name="Stewart A."/>
            <person name="Sgouros J.G."/>
            <person name="Peat N."/>
            <person name="Hayles J."/>
            <person name="Baker S.G."/>
            <person name="Basham D."/>
            <person name="Bowman S."/>
            <person name="Brooks K."/>
            <person name="Brown D."/>
            <person name="Brown S."/>
            <person name="Chillingworth T."/>
            <person name="Churcher C.M."/>
            <person name="Collins M."/>
            <person name="Connor R."/>
            <person name="Cronin A."/>
            <person name="Davis P."/>
            <person name="Feltwell T."/>
            <person name="Fraser A."/>
            <person name="Gentles S."/>
            <person name="Goble A."/>
            <person name="Hamlin N."/>
            <person name="Harris D.E."/>
            <person name="Hidalgo J."/>
            <person name="Hodgson G."/>
            <person name="Holroyd S."/>
            <person name="Hornsby T."/>
            <person name="Howarth S."/>
            <person name="Huckle E.J."/>
            <person name="Hunt S."/>
            <person name="Jagels K."/>
            <person name="James K.D."/>
            <person name="Jones L."/>
            <person name="Jones M."/>
            <person name="Leather S."/>
            <person name="McDonald S."/>
            <person name="McLean J."/>
            <person name="Mooney P."/>
            <person name="Moule S."/>
            <person name="Mungall K.L."/>
            <person name="Murphy L.D."/>
            <person name="Niblett D."/>
            <person name="Odell C."/>
            <person name="Oliver K."/>
            <person name="O'Neil S."/>
            <person name="Pearson D."/>
            <person name="Quail M.A."/>
            <person name="Rabbinowitsch E."/>
            <person name="Rutherford K.M."/>
            <person name="Rutter S."/>
            <person name="Saunders D."/>
            <person name="Seeger K."/>
            <person name="Sharp S."/>
            <person name="Skelton J."/>
            <person name="Simmonds M.N."/>
            <person name="Squares R."/>
            <person name="Squares S."/>
            <person name="Stevens K."/>
            <person name="Taylor K."/>
            <person name="Taylor R.G."/>
            <person name="Tivey A."/>
            <person name="Walsh S.V."/>
            <person name="Warren T."/>
            <person name="Whitehead S."/>
            <person name="Woodward J.R."/>
            <person name="Volckaert G."/>
            <person name="Aert R."/>
            <person name="Robben J."/>
            <person name="Grymonprez B."/>
            <person name="Weltjens I."/>
            <person name="Vanstreels E."/>
            <person name="Rieger M."/>
            <person name="Schaefer M."/>
            <person name="Mueller-Auer S."/>
            <person name="Gabel C."/>
            <person name="Fuchs M."/>
            <person name="Duesterhoeft A."/>
            <person name="Fritzc C."/>
            <person name="Holzer E."/>
            <person name="Moestl D."/>
            <person name="Hilbert H."/>
            <person name="Borzym K."/>
            <person name="Langer I."/>
            <person name="Beck A."/>
            <person name="Lehrach H."/>
            <person name="Reinhardt R."/>
            <person name="Pohl T.M."/>
            <person name="Eger P."/>
            <person name="Zimmermann W."/>
            <person name="Wedler H."/>
            <person name="Wambutt R."/>
            <person name="Purnelle B."/>
            <person name="Goffeau A."/>
            <person name="Cadieu E."/>
            <person name="Dreano S."/>
            <person name="Gloux S."/>
            <person name="Lelaure V."/>
            <person name="Mottier S."/>
            <person name="Galibert F."/>
            <person name="Aves S.J."/>
            <person name="Xiang Z."/>
            <person name="Hunt C."/>
            <person name="Moore K."/>
            <person name="Hurst S.M."/>
            <person name="Lucas M."/>
            <person name="Rochet M."/>
            <person name="Gaillardin C."/>
            <person name="Tallada V.A."/>
            <person name="Garzon A."/>
            <person name="Thode G."/>
            <person name="Daga R.R."/>
            <person name="Cruzado L."/>
            <person name="Jimenez J."/>
            <person name="Sanchez M."/>
            <person name="del Rey F."/>
            <person name="Benito J."/>
            <person name="Dominguez A."/>
            <person name="Revuelta J.L."/>
            <person name="Moreno S."/>
            <person name="Armstrong J."/>
            <person name="Forsburg S.L."/>
            <person name="Cerutti L."/>
            <person name="Lowe T."/>
            <person name="McCombie W.R."/>
            <person name="Paulsen I."/>
            <person name="Potashkin J."/>
            <person name="Shpakovski G.V."/>
            <person name="Ussery D."/>
            <person name="Barrell B.G."/>
            <person name="Nurse P."/>
        </authorList>
    </citation>
    <scope>NUCLEOTIDE SEQUENCE [LARGE SCALE GENOMIC DNA]</scope>
    <source>
        <strain>972 / ATCC 24843</strain>
    </source>
</reference>
<reference key="2">
    <citation type="journal article" date="2011" name="Science">
        <title>Comparative functional genomics of the fission yeasts.</title>
        <authorList>
            <person name="Rhind N."/>
            <person name="Chen Z."/>
            <person name="Yassour M."/>
            <person name="Thompson D.A."/>
            <person name="Haas B.J."/>
            <person name="Habib N."/>
            <person name="Wapinski I."/>
            <person name="Roy S."/>
            <person name="Lin M.F."/>
            <person name="Heiman D.I."/>
            <person name="Young S.K."/>
            <person name="Furuya K."/>
            <person name="Guo Y."/>
            <person name="Pidoux A."/>
            <person name="Chen H.M."/>
            <person name="Robbertse B."/>
            <person name="Goldberg J.M."/>
            <person name="Aoki K."/>
            <person name="Bayne E.H."/>
            <person name="Berlin A.M."/>
            <person name="Desjardins C.A."/>
            <person name="Dobbs E."/>
            <person name="Dukaj L."/>
            <person name="Fan L."/>
            <person name="FitzGerald M.G."/>
            <person name="French C."/>
            <person name="Gujja S."/>
            <person name="Hansen K."/>
            <person name="Keifenheim D."/>
            <person name="Levin J.Z."/>
            <person name="Mosher R.A."/>
            <person name="Mueller C.A."/>
            <person name="Pfiffner J."/>
            <person name="Priest M."/>
            <person name="Russ C."/>
            <person name="Smialowska A."/>
            <person name="Swoboda P."/>
            <person name="Sykes S.M."/>
            <person name="Vaughn M."/>
            <person name="Vengrova S."/>
            <person name="Yoder R."/>
            <person name="Zeng Q."/>
            <person name="Allshire R."/>
            <person name="Baulcombe D."/>
            <person name="Birren B.W."/>
            <person name="Brown W."/>
            <person name="Ekwall K."/>
            <person name="Kellis M."/>
            <person name="Leatherwood J."/>
            <person name="Levin H."/>
            <person name="Margalit H."/>
            <person name="Martienssen R."/>
            <person name="Nieduszynski C.A."/>
            <person name="Spatafora J.W."/>
            <person name="Friedman N."/>
            <person name="Dalgaard J.Z."/>
            <person name="Baumann P."/>
            <person name="Niki H."/>
            <person name="Regev A."/>
            <person name="Nusbaum C."/>
        </authorList>
    </citation>
    <scope>REVISION OF GENE MODEL</scope>
</reference>
<reference key="3">
    <citation type="journal article" date="2006" name="Nat. Biotechnol.">
        <title>ORFeome cloning and global analysis of protein localization in the fission yeast Schizosaccharomyces pombe.</title>
        <authorList>
            <person name="Matsuyama A."/>
            <person name="Arai R."/>
            <person name="Yashiroda Y."/>
            <person name="Shirai A."/>
            <person name="Kamata A."/>
            <person name="Sekido S."/>
            <person name="Kobayashi Y."/>
            <person name="Hashimoto A."/>
            <person name="Hamamoto M."/>
            <person name="Hiraoka Y."/>
            <person name="Horinouchi S."/>
            <person name="Yoshida M."/>
        </authorList>
    </citation>
    <scope>SUBCELLULAR LOCATION [LARGE SCALE ANALYSIS]</scope>
</reference>
<reference key="4">
    <citation type="journal article" date="2008" name="Nucleic Acids Res.">
        <title>Two conserved modules of Schizosaccharomyces pombe Mediator regulate distinct cellular pathways.</title>
        <authorList>
            <person name="Linder T."/>
            <person name="Rasmussen N.N."/>
            <person name="Samuelsen C.O."/>
            <person name="Chatzidaki E."/>
            <person name="Baraznenok V."/>
            <person name="Beve J."/>
            <person name="Henriksen P."/>
            <person name="Gustafsson C.M."/>
            <person name="Holmberg S."/>
        </authorList>
    </citation>
    <scope>FUNCTION</scope>
    <scope>IDENTIFICATION IN THE MEDIATOR COMPLEX</scope>
</reference>
<keyword id="KW-0002">3D-structure</keyword>
<keyword id="KW-0539">Nucleus</keyword>
<keyword id="KW-1185">Reference proteome</keyword>
<protein>
    <recommendedName>
        <fullName>Mediator of RNA polymerase II transcription subunit 20</fullName>
    </recommendedName>
    <alternativeName>
        <fullName>Mediator complex subunit 20</fullName>
    </alternativeName>
</protein>
<organism>
    <name type="scientific">Schizosaccharomyces pombe (strain 972 / ATCC 24843)</name>
    <name type="common">Fission yeast</name>
    <dbReference type="NCBI Taxonomy" id="284812"/>
    <lineage>
        <taxon>Eukaryota</taxon>
        <taxon>Fungi</taxon>
        <taxon>Dikarya</taxon>
        <taxon>Ascomycota</taxon>
        <taxon>Taphrinomycotina</taxon>
        <taxon>Schizosaccharomycetes</taxon>
        <taxon>Schizosaccharomycetales</taxon>
        <taxon>Schizosaccharomycetaceae</taxon>
        <taxon>Schizosaccharomyces</taxon>
    </lineage>
</organism>
<proteinExistence type="evidence at protein level"/>
<dbReference type="EMBL" id="CU329670">
    <property type="protein sequence ID" value="CAA93688.2"/>
    <property type="molecule type" value="Genomic_DNA"/>
</dbReference>
<dbReference type="PIR" id="T37857">
    <property type="entry name" value="T37857"/>
</dbReference>
<dbReference type="RefSeq" id="NP_593728.2">
    <property type="nucleotide sequence ID" value="NM_001019159.2"/>
</dbReference>
<dbReference type="PDB" id="5N9J">
    <property type="method" value="X-ray"/>
    <property type="resolution" value="3.40 A"/>
    <property type="chains" value="Y=1-193"/>
</dbReference>
<dbReference type="PDB" id="5U0P">
    <property type="method" value="EM"/>
    <property type="resolution" value="4.40 A"/>
    <property type="chains" value="T=1-193"/>
</dbReference>
<dbReference type="PDB" id="5U0S">
    <property type="method" value="EM"/>
    <property type="resolution" value="7.80 A"/>
    <property type="chains" value="T=1-193"/>
</dbReference>
<dbReference type="PDBsum" id="5N9J"/>
<dbReference type="PDBsum" id="5U0P"/>
<dbReference type="PDBsum" id="5U0S"/>
<dbReference type="EMDB" id="EMD-8479"/>
<dbReference type="EMDB" id="EMD-8480"/>
<dbReference type="SMR" id="Q10317"/>
<dbReference type="BioGRID" id="278884">
    <property type="interactions" value="101"/>
</dbReference>
<dbReference type="DIP" id="DIP-60135N"/>
<dbReference type="FunCoup" id="Q10317">
    <property type="interactions" value="23"/>
</dbReference>
<dbReference type="IntAct" id="Q10317">
    <property type="interactions" value="3"/>
</dbReference>
<dbReference type="STRING" id="284812.Q10317"/>
<dbReference type="iPTMnet" id="Q10317"/>
<dbReference type="PaxDb" id="4896-SPAC17G8.05.1"/>
<dbReference type="EnsemblFungi" id="SPAC17G8.05.1">
    <property type="protein sequence ID" value="SPAC17G8.05.1:pep"/>
    <property type="gene ID" value="SPAC17G8.05"/>
</dbReference>
<dbReference type="GeneID" id="2542421"/>
<dbReference type="KEGG" id="spo:2542421"/>
<dbReference type="PomBase" id="SPAC17G8.05">
    <property type="gene designation" value="med20"/>
</dbReference>
<dbReference type="VEuPathDB" id="FungiDB:SPAC17G8.05"/>
<dbReference type="eggNOG" id="ENOG502SBIU">
    <property type="taxonomic scope" value="Eukaryota"/>
</dbReference>
<dbReference type="HOGENOM" id="CLU_089405_0_0_1"/>
<dbReference type="InParanoid" id="Q10317"/>
<dbReference type="OMA" id="KKWIVQY"/>
<dbReference type="PRO" id="PR:Q10317"/>
<dbReference type="Proteomes" id="UP000002485">
    <property type="component" value="Chromosome I"/>
</dbReference>
<dbReference type="GO" id="GO:0016592">
    <property type="term" value="C:mediator complex"/>
    <property type="evidence" value="ECO:0000314"/>
    <property type="project" value="PomBase"/>
</dbReference>
<dbReference type="GO" id="GO:0005634">
    <property type="term" value="C:nucleus"/>
    <property type="evidence" value="ECO:0007005"/>
    <property type="project" value="PomBase"/>
</dbReference>
<dbReference type="GO" id="GO:0003713">
    <property type="term" value="F:transcription coactivator activity"/>
    <property type="evidence" value="ECO:0000318"/>
    <property type="project" value="GO_Central"/>
</dbReference>
<dbReference type="GO" id="GO:0060261">
    <property type="term" value="P:positive regulation of transcription initiation by RNA polymerase II"/>
    <property type="evidence" value="ECO:0000269"/>
    <property type="project" value="PomBase"/>
</dbReference>
<dbReference type="GO" id="GO:0006357">
    <property type="term" value="P:regulation of transcription by RNA polymerase II"/>
    <property type="evidence" value="ECO:0000318"/>
    <property type="project" value="GO_Central"/>
</dbReference>
<dbReference type="InterPro" id="IPR013921">
    <property type="entry name" value="Mediator_Med20"/>
</dbReference>
<dbReference type="PANTHER" id="PTHR12465:SF0">
    <property type="entry name" value="MEDIATOR OF RNA POLYMERASE II TRANSCRIPTION SUBUNIT 20"/>
    <property type="match status" value="1"/>
</dbReference>
<dbReference type="PANTHER" id="PTHR12465">
    <property type="entry name" value="UBIQUITIN SPECIFIC PROTEASE HOMOLOG 49"/>
    <property type="match status" value="1"/>
</dbReference>
<dbReference type="Pfam" id="PF08612">
    <property type="entry name" value="Med20"/>
    <property type="match status" value="1"/>
</dbReference>
<accession>Q10317</accession>
<feature type="chain" id="PRO_0000116590" description="Mediator of RNA polymerase II transcription subunit 20">
    <location>
        <begin position="1"/>
        <end position="193"/>
    </location>
</feature>
<feature type="strand" evidence="4">
    <location>
        <begin position="3"/>
        <end position="8"/>
    </location>
</feature>
<feature type="helix" evidence="4">
    <location>
        <begin position="12"/>
        <end position="15"/>
    </location>
</feature>
<feature type="helix" evidence="4">
    <location>
        <begin position="18"/>
        <end position="29"/>
    </location>
</feature>
<feature type="strand" evidence="4">
    <location>
        <begin position="32"/>
        <end position="45"/>
    </location>
</feature>
<feature type="strand" evidence="4">
    <location>
        <begin position="51"/>
        <end position="58"/>
    </location>
</feature>
<feature type="turn" evidence="4">
    <location>
        <begin position="59"/>
        <end position="62"/>
    </location>
</feature>
<feature type="strand" evidence="4">
    <location>
        <begin position="63"/>
        <end position="68"/>
    </location>
</feature>
<feature type="turn" evidence="4">
    <location>
        <begin position="69"/>
        <end position="71"/>
    </location>
</feature>
<feature type="strand" evidence="4">
    <location>
        <begin position="72"/>
        <end position="76"/>
    </location>
</feature>
<feature type="helix" evidence="4">
    <location>
        <begin position="78"/>
        <end position="87"/>
    </location>
</feature>
<feature type="strand" evidence="4">
    <location>
        <begin position="95"/>
        <end position="105"/>
    </location>
</feature>
<feature type="strand" evidence="4">
    <location>
        <begin position="108"/>
        <end position="117"/>
    </location>
</feature>
<feature type="strand" evidence="4">
    <location>
        <begin position="124"/>
        <end position="130"/>
    </location>
</feature>
<feature type="helix" evidence="4">
    <location>
        <begin position="136"/>
        <end position="150"/>
    </location>
</feature>
<feature type="turn" evidence="4">
    <location>
        <begin position="153"/>
        <end position="157"/>
    </location>
</feature>
<feature type="strand" evidence="4">
    <location>
        <begin position="169"/>
        <end position="172"/>
    </location>
</feature>
<feature type="helix" evidence="4">
    <location>
        <begin position="175"/>
        <end position="185"/>
    </location>
</feature>
<gene>
    <name type="primary">med20</name>
    <name type="ORF">SPAC17G8.05</name>
</gene>
<evidence type="ECO:0000269" key="1">
    <source>
    </source>
</evidence>
<evidence type="ECO:0000269" key="2">
    <source>
    </source>
</evidence>
<evidence type="ECO:0000305" key="3"/>
<evidence type="ECO:0007829" key="4">
    <source>
        <dbReference type="PDB" id="5N9J"/>
    </source>
</evidence>
<name>MED20_SCHPO</name>